<keyword id="KW-0998">Cell outer membrane</keyword>
<keyword id="KW-0903">Direct protein sequencing</keyword>
<keyword id="KW-0472">Membrane</keyword>
<keyword id="KW-0574">Periplasm</keyword>
<keyword id="KW-1185">Reference proteome</keyword>
<keyword id="KW-0964">Secreted</keyword>
<keyword id="KW-0732">Signal</keyword>
<keyword id="KW-0812">Transmembrane</keyword>
<keyword id="KW-1134">Transmembrane beta strand</keyword>
<gene>
    <name type="primary">flu</name>
    <name type="synonym">yeeQ</name>
    <name type="synonym">yzzX</name>
    <name type="ordered locus">b2000</name>
    <name type="ordered locus">JW1982</name>
</gene>
<accession>P39180</accession>
<accession>P75614</accession>
<accession>P76360</accession>
<accession>P97241</accession>
<accession>Q46771</accession>
<comment type="function">
    <text evidence="3">Controls colony form variation and autoaggregation. May function as an adhesin.</text>
</comment>
<comment type="subunit">
    <text evidence="4">Interaction with TamA of the translocation and assembly module (TAM) initiates insertion in the outer membrane (PubMed:25341963).</text>
</comment>
<comment type="subcellular location">
    <molecule>Antigen 43</molecule>
    <subcellularLocation>
        <location evidence="1">Periplasm</location>
    </subcellularLocation>
</comment>
<comment type="subcellular location">
    <molecule>Antigen 43 alpha chain</molecule>
    <subcellularLocation>
        <location>Secreted</location>
    </subcellularLocation>
    <subcellularLocation>
        <location evidence="3">Cell surface</location>
    </subcellularLocation>
    <text>The cell surface component is about 60 kDa and can be released by mild heat treatment (PubMed:22466966).</text>
</comment>
<comment type="subcellular location">
    <molecule>Antigen 43 beta chain</molecule>
    <subcellularLocation>
        <location evidence="7">Cell outer membrane</location>
        <topology evidence="6">Multi-pass membrane protein</topology>
    </subcellularLocation>
    <text>May form a beta-barrel.</text>
</comment>
<comment type="domain">
    <text evidence="4 6">The signal peptide, cleaved at the inner membrane, guides the autotransporter protein to the periplasmic space. The C-terminal beta chain translocator domain inserts in the outer membrane via TamA (PubMed:25341963). This domain probably forms a hydrophilic pore for the translocation of the passenger domain to the bacterial cell surface, with subsequent cleavage. Finally, the mature protein remains tightly associated with the bacterium (Probable).</text>
</comment>
<dbReference type="EMBL" id="U24429">
    <property type="protein sequence ID" value="AAB47869.1"/>
    <property type="molecule type" value="Genomic_DNA"/>
</dbReference>
<dbReference type="EMBL" id="U00096">
    <property type="protein sequence ID" value="AAT48141.1"/>
    <property type="molecule type" value="Genomic_DNA"/>
</dbReference>
<dbReference type="EMBL" id="AP009048">
    <property type="protein sequence ID" value="BAA15825.2"/>
    <property type="molecule type" value="Genomic_DNA"/>
</dbReference>
<dbReference type="RefSeq" id="WP_000820410.1">
    <property type="nucleotide sequence ID" value="NZ_LN832404.1"/>
</dbReference>
<dbReference type="RefSeq" id="YP_026164.1">
    <property type="nucleotide sequence ID" value="NC_000913.3"/>
</dbReference>
<dbReference type="SMR" id="P39180"/>
<dbReference type="BioGRID" id="4260664">
    <property type="interactions" value="9"/>
</dbReference>
<dbReference type="DIP" id="DIP-2892N"/>
<dbReference type="FunCoup" id="P39180">
    <property type="interactions" value="19"/>
</dbReference>
<dbReference type="IntAct" id="P39180">
    <property type="interactions" value="4"/>
</dbReference>
<dbReference type="STRING" id="511145.b2000"/>
<dbReference type="TCDB" id="1.B.12.8.2">
    <property type="family name" value="the autotransporter-1 (at-1) family"/>
</dbReference>
<dbReference type="jPOST" id="P39180"/>
<dbReference type="PaxDb" id="511145-b2000"/>
<dbReference type="EnsemblBacteria" id="AAT48141">
    <property type="protein sequence ID" value="AAT48141"/>
    <property type="gene ID" value="b2000"/>
</dbReference>
<dbReference type="GeneID" id="946540"/>
<dbReference type="KEGG" id="ecj:JW1982"/>
<dbReference type="KEGG" id="eco:b2000"/>
<dbReference type="KEGG" id="ecoc:C3026_11280"/>
<dbReference type="PATRIC" id="fig|1411691.4.peg.253"/>
<dbReference type="EchoBASE" id="EB2550"/>
<dbReference type="eggNOG" id="COG3468">
    <property type="taxonomic scope" value="Bacteria"/>
</dbReference>
<dbReference type="HOGENOM" id="CLU_009845_1_0_6"/>
<dbReference type="InParanoid" id="P39180"/>
<dbReference type="OMA" id="SGYEFGR"/>
<dbReference type="OrthoDB" id="6053567at2"/>
<dbReference type="PhylomeDB" id="P39180"/>
<dbReference type="BioCyc" id="EcoCyc:G7080-MONOMER"/>
<dbReference type="PRO" id="PR:P39180"/>
<dbReference type="Proteomes" id="UP000000625">
    <property type="component" value="Chromosome"/>
</dbReference>
<dbReference type="GO" id="GO:0009279">
    <property type="term" value="C:cell outer membrane"/>
    <property type="evidence" value="ECO:0000314"/>
    <property type="project" value="EcoCyc"/>
</dbReference>
<dbReference type="GO" id="GO:0009986">
    <property type="term" value="C:cell surface"/>
    <property type="evidence" value="ECO:0007669"/>
    <property type="project" value="UniProtKB-SubCell"/>
</dbReference>
<dbReference type="GO" id="GO:0005576">
    <property type="term" value="C:extracellular region"/>
    <property type="evidence" value="ECO:0007669"/>
    <property type="project" value="UniProtKB-SubCell"/>
</dbReference>
<dbReference type="GO" id="GO:0042597">
    <property type="term" value="C:periplasmic space"/>
    <property type="evidence" value="ECO:0007669"/>
    <property type="project" value="UniProtKB-SubCell"/>
</dbReference>
<dbReference type="CDD" id="cd01344">
    <property type="entry name" value="PL2_Passenger_AT"/>
    <property type="match status" value="1"/>
</dbReference>
<dbReference type="FunFam" id="2.40.128.130:FF:000001">
    <property type="entry name" value="Antigen 43 AG43"/>
    <property type="match status" value="1"/>
</dbReference>
<dbReference type="Gene3D" id="2.160.20.20">
    <property type="match status" value="1"/>
</dbReference>
<dbReference type="Gene3D" id="2.40.128.130">
    <property type="entry name" value="Autotransporter beta-domain"/>
    <property type="match status" value="1"/>
</dbReference>
<dbReference type="InterPro" id="IPR043990">
    <property type="entry name" value="AC_1"/>
</dbReference>
<dbReference type="InterPro" id="IPR030930">
    <property type="entry name" value="AIDA"/>
</dbReference>
<dbReference type="InterPro" id="IPR005546">
    <property type="entry name" value="Autotransporte_beta"/>
</dbReference>
<dbReference type="InterPro" id="IPR036709">
    <property type="entry name" value="Autotransporte_beta_dom_sf"/>
</dbReference>
<dbReference type="InterPro" id="IPR012332">
    <property type="entry name" value="Autotransporter_pectin_lyase_C"/>
</dbReference>
<dbReference type="InterPro" id="IPR024973">
    <property type="entry name" value="ESPR"/>
</dbReference>
<dbReference type="InterPro" id="IPR011050">
    <property type="entry name" value="Pectin_lyase_fold/virulence"/>
</dbReference>
<dbReference type="NCBIfam" id="NF033177">
    <property type="entry name" value="auto_Ag43"/>
    <property type="match status" value="2"/>
</dbReference>
<dbReference type="NCBIfam" id="TIGR04415">
    <property type="entry name" value="O_hepto_targRPT"/>
    <property type="match status" value="5"/>
</dbReference>
<dbReference type="Pfam" id="PF18883">
    <property type="entry name" value="AC_1"/>
    <property type="match status" value="1"/>
</dbReference>
<dbReference type="Pfam" id="PF16168">
    <property type="entry name" value="AIDA"/>
    <property type="match status" value="2"/>
</dbReference>
<dbReference type="Pfam" id="PF03797">
    <property type="entry name" value="Autotransporter"/>
    <property type="match status" value="1"/>
</dbReference>
<dbReference type="Pfam" id="PF13018">
    <property type="entry name" value="ESPR"/>
    <property type="match status" value="1"/>
</dbReference>
<dbReference type="SMART" id="SM00869">
    <property type="entry name" value="Autotransporter"/>
    <property type="match status" value="1"/>
</dbReference>
<dbReference type="SUPFAM" id="SSF103515">
    <property type="entry name" value="Autotransporter"/>
    <property type="match status" value="1"/>
</dbReference>
<dbReference type="SUPFAM" id="SSF51126">
    <property type="entry name" value="Pectin lyase-like"/>
    <property type="match status" value="1"/>
</dbReference>
<dbReference type="PROSITE" id="PS51208">
    <property type="entry name" value="AUTOTRANSPORTER"/>
    <property type="match status" value="1"/>
</dbReference>
<evidence type="ECO:0000250" key="1"/>
<evidence type="ECO:0000255" key="2">
    <source>
        <dbReference type="PROSITE-ProRule" id="PRU00556"/>
    </source>
</evidence>
<evidence type="ECO:0000269" key="3">
    <source>
    </source>
</evidence>
<evidence type="ECO:0000269" key="4">
    <source>
    </source>
</evidence>
<evidence type="ECO:0000269" key="5">
    <source>
    </source>
</evidence>
<evidence type="ECO:0000305" key="6"/>
<evidence type="ECO:0000305" key="7">
    <source>
    </source>
</evidence>
<protein>
    <recommendedName>
        <fullName>Antigen 43</fullName>
        <shortName>AG43</shortName>
    </recommendedName>
    <alternativeName>
        <fullName>Fluffing protein</fullName>
    </alternativeName>
    <component>
        <recommendedName>
            <fullName>Antigen 43 alpha chain</fullName>
        </recommendedName>
    </component>
    <component>
        <recommendedName>
            <fullName>Antigen 43 beta chain</fullName>
        </recommendedName>
    </component>
</protein>
<sequence>MKRHLNTCYRLVWNHMTGAFVVASELARARGKRGGVAVALSLAAVTSLPVLAADIVVHPGETVNGGTLANHDNQIVFGTTNGMTISTGLEYGPDNEANTGGQWVQDGGTANKTTVTSGGLQRVNPGGSVSDTVISAGGGQSLQGRAVNTTLNGGEQWMHEGAIATGTVINDKGWQVVKPGTVATDTVVNTGAEGGPDAENGDTGQFVRGDAVRTTINKNGRQIVRAEGTANTTVVYAGGDQTVHGHALDTTLNGGYQYVHNGGTASDTVVNSDGWQIVKNGGVAGNTTVNQKGRLQVDAGGTATNVTLKQGGALVTSTAATVTGINRLGAFSVVEGKADNVVLENGGRLDVLTGHTATNTRVDDGGTLDVRNGGTATTVSMGNGGVLLADSGAAVSGTRSDGKAFSIGGGQADALMLEKGSSFTLNAGDTATDTTVNGGLFTARGGTLAGTTTLNNGAILTLSGKTVNNDTLTIREGDALLQGGSLTGNGSVEKSGSGTLTVSNTTLTQKAVNLNEGTLTLNDSTVTTDVIAQRGTALKLTGSTVLNGAIDPTNVTLASGATWNIPDNATVQSVVDDLSHAGQIHFTSTRTGKFVPATLKVKNLNGQNGTISLRVRPDMAQNNADRLVIDGGRATGKTILNLVNAGNSASGLATSGKGIQVVEAINGATTEEGAFVQGNRLQAGAFNYSLNRDSDESWYLRSENAYRAEVPLYASMLTQAMDYDRIVAGSRSHQTGVNGENNSVRLSIQGGHLGHDNNGGIARGATPESSGSYGFVRLEGDLMRTEVAGMSVTAGVYGAAGHSSVDVKDDDGSRAGTVRDDAGSLGGYLNLVHTSSGLWADIVAQGTRHSMKASSDNNDFRARGWGWLGSLETGLPFSITDNLMLEPQLQYTWQGLSLDDGKDNAGYVKFGHGSAQHVRAGFRLGSHNDMTFGEGTSSRAPLRDSAKHSVSELPVNWWVQPSVIRTFSSRGDMRVGTSTAGSGMTFSPSQNGTSLDLQAGLEARVRENITLGVQAGYAHSVSGSSAEGYNGQATLNVTF</sequence>
<name>AG43_ECOLI</name>
<reference key="1">
    <citation type="submission" date="1997-01" db="EMBL/GenBank/DDBJ databases">
        <authorList>
            <person name="Henderson I.R."/>
            <person name="Owen P."/>
        </authorList>
    </citation>
    <scope>NUCLEOTIDE SEQUENCE [GENOMIC DNA]</scope>
    <source>
        <strain>ML 308-225</strain>
    </source>
</reference>
<reference key="2">
    <citation type="journal article" date="1996" name="DNA Res.">
        <title>A 460-kb DNA sequence of the Escherichia coli K-12 genome corresponding to the 40.1-50.0 min region on the linkage map.</title>
        <authorList>
            <person name="Itoh T."/>
            <person name="Aiba H."/>
            <person name="Baba T."/>
            <person name="Fujita K."/>
            <person name="Hayashi K."/>
            <person name="Inada T."/>
            <person name="Isono K."/>
            <person name="Kasai H."/>
            <person name="Kimura S."/>
            <person name="Kitakawa M."/>
            <person name="Kitagawa M."/>
            <person name="Makino K."/>
            <person name="Miki T."/>
            <person name="Mizobuchi K."/>
            <person name="Mori H."/>
            <person name="Mori T."/>
            <person name="Motomura K."/>
            <person name="Nakade S."/>
            <person name="Nakamura Y."/>
            <person name="Nashimoto H."/>
            <person name="Nishio Y."/>
            <person name="Oshima T."/>
            <person name="Saito N."/>
            <person name="Sampei G."/>
            <person name="Seki Y."/>
            <person name="Sivasundaram S."/>
            <person name="Tagami H."/>
            <person name="Takeda J."/>
            <person name="Takemoto K."/>
            <person name="Wada C."/>
            <person name="Yamamoto Y."/>
            <person name="Horiuchi T."/>
        </authorList>
    </citation>
    <scope>NUCLEOTIDE SEQUENCE [LARGE SCALE GENOMIC DNA]</scope>
    <source>
        <strain>K12 / W3110 / ATCC 27325 / DSM 5911</strain>
    </source>
</reference>
<reference key="3">
    <citation type="journal article" date="1997" name="Science">
        <title>The complete genome sequence of Escherichia coli K-12.</title>
        <authorList>
            <person name="Blattner F.R."/>
            <person name="Plunkett G. III"/>
            <person name="Bloch C.A."/>
            <person name="Perna N.T."/>
            <person name="Burland V."/>
            <person name="Riley M."/>
            <person name="Collado-Vides J."/>
            <person name="Glasner J.D."/>
            <person name="Rode C.K."/>
            <person name="Mayhew G.F."/>
            <person name="Gregor J."/>
            <person name="Davis N.W."/>
            <person name="Kirkpatrick H.A."/>
            <person name="Goeden M.A."/>
            <person name="Rose D.J."/>
            <person name="Mau B."/>
            <person name="Shao Y."/>
        </authorList>
    </citation>
    <scope>NUCLEOTIDE SEQUENCE [LARGE SCALE GENOMIC DNA]</scope>
    <source>
        <strain>K12 / MG1655 / ATCC 47076</strain>
    </source>
</reference>
<reference key="4">
    <citation type="journal article" date="2006" name="Nucleic Acids Res.">
        <title>Escherichia coli K-12: a cooperatively developed annotation snapshot -- 2005.</title>
        <authorList>
            <person name="Riley M."/>
            <person name="Abe T."/>
            <person name="Arnaud M.B."/>
            <person name="Berlyn M.K.B."/>
            <person name="Blattner F.R."/>
            <person name="Chaudhuri R.R."/>
            <person name="Glasner J.D."/>
            <person name="Horiuchi T."/>
            <person name="Keseler I.M."/>
            <person name="Kosuge T."/>
            <person name="Mori H."/>
            <person name="Perna N.T."/>
            <person name="Plunkett G. III"/>
            <person name="Rudd K.E."/>
            <person name="Serres M.H."/>
            <person name="Thomas G.H."/>
            <person name="Thomson N.R."/>
            <person name="Wishart D."/>
            <person name="Wanner B.L."/>
        </authorList>
    </citation>
    <scope>SEQUENCE REVISION TO 824</scope>
</reference>
<reference key="5">
    <citation type="journal article" date="2006" name="Mol. Syst. Biol.">
        <title>Highly accurate genome sequences of Escherichia coli K-12 strains MG1655 and W3110.</title>
        <authorList>
            <person name="Hayashi K."/>
            <person name="Morooka N."/>
            <person name="Yamamoto Y."/>
            <person name="Fujita K."/>
            <person name="Isono K."/>
            <person name="Choi S."/>
            <person name="Ohtsubo E."/>
            <person name="Baba T."/>
            <person name="Wanner B.L."/>
            <person name="Mori H."/>
            <person name="Horiuchi T."/>
        </authorList>
    </citation>
    <scope>NUCLEOTIDE SEQUENCE [LARGE SCALE GENOMIC DNA]</scope>
    <source>
        <strain>K12 / W3110 / ATCC 27325 / DSM 5911</strain>
    </source>
</reference>
<reference key="6">
    <citation type="journal article" date="1989" name="J. Bacteriol.">
        <title>Purification and N-terminal sequence of the alpha subunit of antigen 43, a unique protein complex associated with the outer membrane of Escherichia coli.</title>
        <authorList>
            <person name="Caffrey P."/>
            <person name="Owen P."/>
        </authorList>
    </citation>
    <scope>PRELIMINARY PROTEIN SEQUENCE OF 53-78</scope>
    <source>
        <strain>ML 308-225</strain>
    </source>
</reference>
<reference key="7">
    <citation type="journal article" date="1997" name="Electrophoresis">
        <title>Comparing the predicted and observed properties of proteins encoded in the genome of Escherichia coli K-12.</title>
        <authorList>
            <person name="Link A.J."/>
            <person name="Robison K."/>
            <person name="Church G.M."/>
        </authorList>
    </citation>
    <scope>PROTEIN SEQUENCE OF 53-63</scope>
    <source>
        <strain>K12 / EMG2</strain>
    </source>
</reference>
<reference key="8">
    <citation type="journal article" date="1997" name="FEMS Microbiol. Lett.">
        <title>Antigen 43, a phase-variable bipartite outer membrane protein, determines colony morphology and autoaggregation in Escherichia coli K-12.</title>
        <authorList>
            <person name="Henderson I.R."/>
            <person name="Meehan M."/>
            <person name="Owen P."/>
        </authorList>
    </citation>
    <scope>GENE NAME</scope>
</reference>
<reference key="9">
    <citation type="journal article" date="2012" name="Nat. Struct. Mol. Biol.">
        <title>Discovery of an archetypal protein transport system in bacterial outer membranes.</title>
        <authorList>
            <person name="Selkrig J."/>
            <person name="Mosbahi K."/>
            <person name="Webb C.T."/>
            <person name="Belousoff M.J."/>
            <person name="Perry A.J."/>
            <person name="Wells T.J."/>
            <person name="Morris F."/>
            <person name="Leyton D.L."/>
            <person name="Totsika M."/>
            <person name="Phan M.D."/>
            <person name="Celik N."/>
            <person name="Kelly M."/>
            <person name="Oates C."/>
            <person name="Hartland E.L."/>
            <person name="Robins-Browne R.M."/>
            <person name="Ramarathinam S.H."/>
            <person name="Purcell A.W."/>
            <person name="Schembri M.A."/>
            <person name="Strugnell R.A."/>
            <person name="Henderson I.R."/>
            <person name="Walker D."/>
            <person name="Lithgow T."/>
        </authorList>
    </citation>
    <scope>SUBCELLULAR LOCATION</scope>
    <scope>FUNCTION IN AGGREGATION</scope>
    <source>
        <strain>K12 / MG1655 / ATCC 47076</strain>
    </source>
</reference>
<reference key="10">
    <citation type="journal article" date="2014" name="Nat. Commun.">
        <title>Reconstitution of a nanomachine driving the assembly of proteins into bacterial outer membranes.</title>
        <authorList>
            <person name="Shen H.H."/>
            <person name="Leyton D.L."/>
            <person name="Shiota T."/>
            <person name="Belousoff M.J."/>
            <person name="Noinaj N."/>
            <person name="Lu J."/>
            <person name="Holt S.A."/>
            <person name="Tan K."/>
            <person name="Selkrig J."/>
            <person name="Webb C.T."/>
            <person name="Buchanan S.K."/>
            <person name="Martin L.L."/>
            <person name="Lithgow T."/>
        </authorList>
    </citation>
    <scope>SUBUNIT</scope>
    <scope>DOMAIN</scope>
    <source>
        <strain>K12 / BW25113</strain>
    </source>
</reference>
<proteinExistence type="evidence at protein level"/>
<feature type="signal peptide" evidence="5">
    <location>
        <begin position="1"/>
        <end position="52"/>
    </location>
</feature>
<feature type="chain" id="PRO_0000387572" description="Antigen 43">
    <location>
        <begin position="53"/>
        <end position="1039"/>
    </location>
</feature>
<feature type="chain" id="PRO_0000002696" description="Antigen 43 alpha chain">
    <location>
        <begin position="53"/>
        <end position="551"/>
    </location>
</feature>
<feature type="chain" id="PRO_0000002697" description="Antigen 43 beta chain">
    <location>
        <begin position="552"/>
        <end position="1039"/>
    </location>
</feature>
<feature type="domain" description="Autotransporter" evidence="2">
    <location>
        <begin position="737"/>
        <end position="1039"/>
    </location>
</feature>
<feature type="sequence variant" description="In strain: ML 308-225.">
    <original>K</original>
    <variation>N</variation>
    <location>
        <position position="2"/>
    </location>
</feature>
<feature type="sequence variant" description="In strain: ML 308-225.">
    <original>SL</original>
    <variation>FF</variation>
    <location>
        <begin position="41"/>
        <end position="42"/>
    </location>
</feature>
<feature type="sequence variant" description="In strain: ML 308-225.">
    <original>T</original>
    <variation>K</variation>
    <location>
        <position position="46"/>
    </location>
</feature>
<feature type="sequence variant" description="In strain: ML 308-225.">
    <original>W</original>
    <variation>L</variation>
    <location>
        <position position="157"/>
    </location>
</feature>
<feature type="sequence variant" description="In strain: ML 308-225.">
    <original>V</original>
    <variation>F</variation>
    <location>
        <position position="188"/>
    </location>
</feature>
<feature type="sequence variant" description="In strain: ML 308-225.">
    <original>ATN</original>
    <variation>STI</variation>
    <location>
        <begin position="303"/>
        <end position="305"/>
    </location>
</feature>
<feature type="sequence variant" description="In strain: ML 308-225.">
    <original>A</original>
    <variation>T</variation>
    <location>
        <position position="320"/>
    </location>
</feature>
<feature type="sequence variant" description="In strain: ML 308-225.">
    <original>N</original>
    <variation>Q</variation>
    <location>
        <position position="372"/>
    </location>
</feature>
<feature type="sequence variant" description="In strain: ML 308-225.">
    <original>E</original>
    <variation>V</variation>
    <location>
        <position position="493"/>
    </location>
</feature>
<feature type="sequence variant" description="In strain: ML 308-225.">
    <original>S</original>
    <variation>N</variation>
    <location>
        <position position="497"/>
    </location>
</feature>
<feature type="sequence variant" description="In strain: ML 308-225.">
    <original>H</original>
    <variation>Y</variation>
    <location>
        <position position="585"/>
    </location>
</feature>
<feature type="sequence variant" description="In strain: ML 308-225.">
    <original>E</original>
    <variation>K</variation>
    <location>
        <position position="709"/>
    </location>
</feature>
<feature type="sequence variant" description="In strain: ML 308-225.">
    <original>M</original>
    <variation>T</variation>
    <location>
        <position position="721"/>
    </location>
</feature>
<feature type="sequence variant" description="In strain: ML 308-225.">
    <original>GHL</original>
    <variation>SHF</variation>
    <location>
        <begin position="751"/>
        <end position="753"/>
    </location>
</feature>
<feature type="sequence variant" description="In strain: ML 308-225.">
    <original>S</original>
    <variation>P</variation>
    <location>
        <position position="803"/>
    </location>
</feature>
<feature type="sequence variant" description="In strain: ML 308-225.">
    <original>A</original>
    <variation>V</variation>
    <location>
        <position position="815"/>
    </location>
</feature>
<feature type="sequence variant" description="In strain: ML 308-225.">
    <original>LNLVHTS</original>
    <variation>MNLIYNA</variation>
    <location>
        <begin position="829"/>
        <end position="835"/>
    </location>
</feature>
<feature type="sequence variant" description="In strain: ML 308-225.">
    <original>QGT</original>
    <variation>LGA</variation>
    <location>
        <begin position="845"/>
        <end position="847"/>
    </location>
</feature>
<feature type="sequence variant" description="In strain: ML 308-225.">
    <original>S</original>
    <variation>T</variation>
    <location>
        <position position="855"/>
    </location>
</feature>
<feature type="sequence variant" description="In strain: ML 308-225.">
    <original>Q</original>
    <variation>L</variation>
    <location>
        <position position="888"/>
    </location>
</feature>
<feature type="sequence variant" description="In strain: ML 308-225.">
    <original>S</original>
    <variation>I</variation>
    <location>
        <position position="1025"/>
    </location>
</feature>
<feature type="sequence conflict" description="In Ref. 7; AA sequence." evidence="6" ref="7">
    <original>ETV</original>
    <variation>TTT</variation>
    <location>
        <begin position="61"/>
        <end position="63"/>
    </location>
</feature>
<organism>
    <name type="scientific">Escherichia coli (strain K12)</name>
    <dbReference type="NCBI Taxonomy" id="83333"/>
    <lineage>
        <taxon>Bacteria</taxon>
        <taxon>Pseudomonadati</taxon>
        <taxon>Pseudomonadota</taxon>
        <taxon>Gammaproteobacteria</taxon>
        <taxon>Enterobacterales</taxon>
        <taxon>Enterobacteriaceae</taxon>
        <taxon>Escherichia</taxon>
    </lineage>
</organism>